<reference key="1">
    <citation type="journal article" date="1993" name="J. Mol. Evol.">
        <title>Evolution of the chordate muscle actin gene.</title>
        <authorList>
            <person name="Kovilur S."/>
            <person name="Jacobson J.W."/>
            <person name="Beach R.L."/>
            <person name="Jeffery W.R."/>
            <person name="Tomlinson C.R."/>
        </authorList>
    </citation>
    <scope>NUCLEOTIDE SEQUENCE</scope>
    <source>
        <tissue>Muscle</tissue>
    </source>
</reference>
<dbReference type="EC" id="3.6.4.-" evidence="1"/>
<dbReference type="PIR" id="S33387">
    <property type="entry name" value="S33387"/>
</dbReference>
<dbReference type="SMR" id="Q00214"/>
<dbReference type="GO" id="GO:0005737">
    <property type="term" value="C:cytoplasm"/>
    <property type="evidence" value="ECO:0007669"/>
    <property type="project" value="UniProtKB-KW"/>
</dbReference>
<dbReference type="GO" id="GO:0005856">
    <property type="term" value="C:cytoskeleton"/>
    <property type="evidence" value="ECO:0007669"/>
    <property type="project" value="UniProtKB-SubCell"/>
</dbReference>
<dbReference type="GO" id="GO:0005524">
    <property type="term" value="F:ATP binding"/>
    <property type="evidence" value="ECO:0007669"/>
    <property type="project" value="UniProtKB-KW"/>
</dbReference>
<dbReference type="GO" id="GO:0016787">
    <property type="term" value="F:hydrolase activity"/>
    <property type="evidence" value="ECO:0007669"/>
    <property type="project" value="UniProtKB-KW"/>
</dbReference>
<dbReference type="CDD" id="cd10224">
    <property type="entry name" value="ASKHA_NBD_actin"/>
    <property type="match status" value="1"/>
</dbReference>
<dbReference type="FunFam" id="2.30.36.70:FF:000001">
    <property type="entry name" value="Actin, alpha skeletal muscle"/>
    <property type="match status" value="1"/>
</dbReference>
<dbReference type="FunFam" id="3.30.420.40:FF:000131">
    <property type="entry name" value="Actin, alpha skeletal muscle"/>
    <property type="match status" value="1"/>
</dbReference>
<dbReference type="FunFam" id="3.30.420.40:FF:000291">
    <property type="entry name" value="Actin, alpha skeletal muscle"/>
    <property type="match status" value="1"/>
</dbReference>
<dbReference type="FunFam" id="3.90.640.10:FF:000047">
    <property type="entry name" value="Actin, alpha skeletal muscle"/>
    <property type="match status" value="1"/>
</dbReference>
<dbReference type="FunFam" id="3.30.420.40:FF:000058">
    <property type="entry name" value="Putative actin-related protein 5"/>
    <property type="match status" value="1"/>
</dbReference>
<dbReference type="Gene3D" id="3.30.420.40">
    <property type="match status" value="2"/>
</dbReference>
<dbReference type="Gene3D" id="3.90.640.10">
    <property type="entry name" value="Actin, Chain A, domain 4"/>
    <property type="match status" value="1"/>
</dbReference>
<dbReference type="InterPro" id="IPR004000">
    <property type="entry name" value="Actin"/>
</dbReference>
<dbReference type="InterPro" id="IPR020902">
    <property type="entry name" value="Actin/actin-like_CS"/>
</dbReference>
<dbReference type="InterPro" id="IPR004001">
    <property type="entry name" value="Actin_CS"/>
</dbReference>
<dbReference type="InterPro" id="IPR043129">
    <property type="entry name" value="ATPase_NBD"/>
</dbReference>
<dbReference type="PANTHER" id="PTHR11937">
    <property type="entry name" value="ACTIN"/>
    <property type="match status" value="1"/>
</dbReference>
<dbReference type="Pfam" id="PF00022">
    <property type="entry name" value="Actin"/>
    <property type="match status" value="1"/>
</dbReference>
<dbReference type="PRINTS" id="PR00190">
    <property type="entry name" value="ACTIN"/>
</dbReference>
<dbReference type="SMART" id="SM00268">
    <property type="entry name" value="ACTIN"/>
    <property type="match status" value="1"/>
</dbReference>
<dbReference type="SUPFAM" id="SSF53067">
    <property type="entry name" value="Actin-like ATPase domain"/>
    <property type="match status" value="2"/>
</dbReference>
<dbReference type="PROSITE" id="PS00406">
    <property type="entry name" value="ACTINS_1"/>
    <property type="match status" value="1"/>
</dbReference>
<dbReference type="PROSITE" id="PS00432">
    <property type="entry name" value="ACTINS_2"/>
    <property type="match status" value="1"/>
</dbReference>
<dbReference type="PROSITE" id="PS01132">
    <property type="entry name" value="ACTINS_ACT_LIKE"/>
    <property type="match status" value="1"/>
</dbReference>
<feature type="chain" id="PRO_0000089029" description="Actin, muscle">
    <location>
        <begin position="1"/>
        <end position="379"/>
    </location>
</feature>
<evidence type="ECO:0000250" key="1">
    <source>
        <dbReference type="UniProtKB" id="P68137"/>
    </source>
</evidence>
<evidence type="ECO:0000305" key="2"/>
<keyword id="KW-0067">ATP-binding</keyword>
<keyword id="KW-0963">Cytoplasm</keyword>
<keyword id="KW-0206">Cytoskeleton</keyword>
<keyword id="KW-0378">Hydrolase</keyword>
<keyword id="KW-0514">Muscle protein</keyword>
<keyword id="KW-0547">Nucleotide-binding</keyword>
<accession>Q00214</accession>
<proteinExistence type="inferred from homology"/>
<comment type="function">
    <text>Actins are highly conserved proteins that are involved in various types of cell motility and are ubiquitously expressed in all eukaryotic cells.</text>
</comment>
<comment type="catalytic activity">
    <reaction evidence="1">
        <text>ATP + H2O = ADP + phosphate + H(+)</text>
        <dbReference type="Rhea" id="RHEA:13065"/>
        <dbReference type="ChEBI" id="CHEBI:15377"/>
        <dbReference type="ChEBI" id="CHEBI:15378"/>
        <dbReference type="ChEBI" id="CHEBI:30616"/>
        <dbReference type="ChEBI" id="CHEBI:43474"/>
        <dbReference type="ChEBI" id="CHEBI:456216"/>
    </reaction>
</comment>
<comment type="subunit">
    <text>Polymerization of globular actin (G-actin) leads to a structural filament (F-actin) in the form of a two-stranded helix. Each actin can bind to 4 others.</text>
</comment>
<comment type="subcellular location">
    <subcellularLocation>
        <location>Cytoplasm</location>
        <location>Cytoskeleton</location>
    </subcellularLocation>
</comment>
<comment type="similarity">
    <text evidence="2">Belongs to the actin family.</text>
</comment>
<organism>
    <name type="scientific">Styela plicata</name>
    <name type="common">Wrinkled sea squirt</name>
    <name type="synonym">Ascidia plicata</name>
    <dbReference type="NCBI Taxonomy" id="7726"/>
    <lineage>
        <taxon>Eukaryota</taxon>
        <taxon>Metazoa</taxon>
        <taxon>Chordata</taxon>
        <taxon>Tunicata</taxon>
        <taxon>Ascidiacea</taxon>
        <taxon>Stolidobranchia</taxon>
        <taxon>Styelidae</taxon>
        <taxon>Styela</taxon>
    </lineage>
</organism>
<name>ACTM_STYPL</name>
<sequence>MEDDQDEEQTALVCDNGSGLVKAGFPGDAPPRAVFPLTVGRPRHQGVMVGMGQKDSYVGDEAQSKRGILTLKYPIEHGIITNWDNMEKIWHHTFYNELRVAPEEHPVLLTEAPLNPKANREKMTQIMFETFNVPAMYVAIQAVLSLYASGRTTGIVLDSGDGVSHNVPIYEGYALPHAIMRLDLAGRDLTDYLMKILTERGYSFVTTAEREIVRDIKEKLCYVALDFEQEMATAASSSSLEKSYELPDGQVITIGNERFRCPETLFQPSFIGMESSGVHETTYNSIMKCDIDIRKDLYANNVLSGGTTMYPGIADRMQKEITALAPSTMKSKIIAPPERKYSVWIGASILASLSTFQQMWITKQEYDESGPSIVHRKCF</sequence>
<protein>
    <recommendedName>
        <fullName>Actin, muscle</fullName>
        <ecNumber evidence="1">3.6.4.-</ecNumber>
    </recommendedName>
</protein>